<organism>
    <name type="scientific">Neisseria gonorrhoeae</name>
    <dbReference type="NCBI Taxonomy" id="485"/>
    <lineage>
        <taxon>Bacteria</taxon>
        <taxon>Pseudomonadati</taxon>
        <taxon>Pseudomonadota</taxon>
        <taxon>Betaproteobacteria</taxon>
        <taxon>Neisseriales</taxon>
        <taxon>Neisseriaceae</taxon>
        <taxon>Neisseria</taxon>
    </lineage>
</organism>
<name>CATA_NEIGO</name>
<sequence>MTTSKCPVTHLTMNNGAPVADNQNSLTAGTRGPLLTQDLWLNEKLADFVREVIPERRMHAKGSGAFGTFTVTRDITKYTRAKIFSEVGKKTEMFGRLATVAGERGADAYTRVRGFALKFYTEEGNWDVVGNNTPVFYPDLRKFPDLNKAVKRSAHQYSSATNNWDFWALLPEALHQVTIVMSDRGIPASYRHMHGFGSHTYSLWNEAGERFWVKFHFRSQQGIKNLTNEEAAKIIADDRESHQRDLYEAIERGEFPKWTMYIQVMPEADAAKVPYHPFDLTKVWPKKDYPLIEVAEFELNRNPENFFADVEQSAFAPSNLVPGIGASPDKMLQARLFNYADAQRYRLGVNFRQIPVNRPRCPVHSNQRDGQGRATELRQPAHYEPNSFGQWSQQPDFAEPPLKINGDAAHWDYRQDDDDYFSQPRALFNLMNDAQKQALFDNTAAAMGDAPDFIKYRHIRNCYRCDPAYGEGGSKALGLTVEEPQAARATDPALGQGGLL</sequence>
<dbReference type="EC" id="1.11.1.6"/>
<dbReference type="EMBL" id="U35457">
    <property type="protein sequence ID" value="AAB18144.1"/>
    <property type="molecule type" value="Genomic_DNA"/>
</dbReference>
<dbReference type="SMR" id="Q59602"/>
<dbReference type="GO" id="GO:0005737">
    <property type="term" value="C:cytoplasm"/>
    <property type="evidence" value="ECO:0007669"/>
    <property type="project" value="TreeGrafter"/>
</dbReference>
<dbReference type="GO" id="GO:0004096">
    <property type="term" value="F:catalase activity"/>
    <property type="evidence" value="ECO:0007669"/>
    <property type="project" value="UniProtKB-EC"/>
</dbReference>
<dbReference type="GO" id="GO:0020037">
    <property type="term" value="F:heme binding"/>
    <property type="evidence" value="ECO:0007669"/>
    <property type="project" value="InterPro"/>
</dbReference>
<dbReference type="GO" id="GO:0046872">
    <property type="term" value="F:metal ion binding"/>
    <property type="evidence" value="ECO:0007669"/>
    <property type="project" value="UniProtKB-KW"/>
</dbReference>
<dbReference type="GO" id="GO:0042744">
    <property type="term" value="P:hydrogen peroxide catabolic process"/>
    <property type="evidence" value="ECO:0007669"/>
    <property type="project" value="UniProtKB-KW"/>
</dbReference>
<dbReference type="GO" id="GO:0042542">
    <property type="term" value="P:response to hydrogen peroxide"/>
    <property type="evidence" value="ECO:0007669"/>
    <property type="project" value="TreeGrafter"/>
</dbReference>
<dbReference type="CDD" id="cd08156">
    <property type="entry name" value="catalase_clade_3"/>
    <property type="match status" value="1"/>
</dbReference>
<dbReference type="FunFam" id="2.40.180.10:FF:000001">
    <property type="entry name" value="Catalase"/>
    <property type="match status" value="1"/>
</dbReference>
<dbReference type="Gene3D" id="2.40.180.10">
    <property type="entry name" value="Catalase core domain"/>
    <property type="match status" value="1"/>
</dbReference>
<dbReference type="InterPro" id="IPR018028">
    <property type="entry name" value="Catalase"/>
</dbReference>
<dbReference type="InterPro" id="IPR040333">
    <property type="entry name" value="Catalase_3"/>
</dbReference>
<dbReference type="InterPro" id="IPR024708">
    <property type="entry name" value="Catalase_AS"/>
</dbReference>
<dbReference type="InterPro" id="IPR024711">
    <property type="entry name" value="Catalase_clade1/3"/>
</dbReference>
<dbReference type="InterPro" id="IPR011614">
    <property type="entry name" value="Catalase_core"/>
</dbReference>
<dbReference type="InterPro" id="IPR002226">
    <property type="entry name" value="Catalase_haem_BS"/>
</dbReference>
<dbReference type="InterPro" id="IPR010582">
    <property type="entry name" value="Catalase_immune_responsive"/>
</dbReference>
<dbReference type="InterPro" id="IPR020835">
    <property type="entry name" value="Catalase_sf"/>
</dbReference>
<dbReference type="PANTHER" id="PTHR11465">
    <property type="entry name" value="CATALASE"/>
    <property type="match status" value="1"/>
</dbReference>
<dbReference type="PANTHER" id="PTHR11465:SF61">
    <property type="entry name" value="CATALASE"/>
    <property type="match status" value="1"/>
</dbReference>
<dbReference type="Pfam" id="PF00199">
    <property type="entry name" value="Catalase"/>
    <property type="match status" value="1"/>
</dbReference>
<dbReference type="Pfam" id="PF06628">
    <property type="entry name" value="Catalase-rel"/>
    <property type="match status" value="1"/>
</dbReference>
<dbReference type="PIRSF" id="PIRSF038928">
    <property type="entry name" value="Catalase_clade1-3"/>
    <property type="match status" value="1"/>
</dbReference>
<dbReference type="PRINTS" id="PR00067">
    <property type="entry name" value="CATALASE"/>
</dbReference>
<dbReference type="SMART" id="SM01060">
    <property type="entry name" value="Catalase"/>
    <property type="match status" value="1"/>
</dbReference>
<dbReference type="SUPFAM" id="SSF56634">
    <property type="entry name" value="Heme-dependent catalase-like"/>
    <property type="match status" value="1"/>
</dbReference>
<dbReference type="PROSITE" id="PS00437">
    <property type="entry name" value="CATALASE_1"/>
    <property type="match status" value="1"/>
</dbReference>
<dbReference type="PROSITE" id="PS00438">
    <property type="entry name" value="CATALASE_2"/>
    <property type="match status" value="1"/>
</dbReference>
<dbReference type="PROSITE" id="PS51402">
    <property type="entry name" value="CATALASE_3"/>
    <property type="match status" value="1"/>
</dbReference>
<evidence type="ECO:0000250" key="1"/>
<evidence type="ECO:0000255" key="2">
    <source>
        <dbReference type="PROSITE-ProRule" id="PRU10013"/>
    </source>
</evidence>
<evidence type="ECO:0000305" key="3"/>
<protein>
    <recommendedName>
        <fullName>Catalase</fullName>
        <ecNumber>1.11.1.6</ecNumber>
    </recommendedName>
</protein>
<feature type="chain" id="PRO_0000084991" description="Catalase">
    <location>
        <begin position="1"/>
        <end position="500"/>
    </location>
</feature>
<feature type="active site" evidence="2">
    <location>
        <position position="59"/>
    </location>
</feature>
<feature type="active site" evidence="2">
    <location>
        <position position="131"/>
    </location>
</feature>
<feature type="binding site" description="axial binding residue" evidence="1">
    <location>
        <position position="339"/>
    </location>
    <ligand>
        <name>heme</name>
        <dbReference type="ChEBI" id="CHEBI:30413"/>
    </ligand>
    <ligandPart>
        <name>Fe</name>
        <dbReference type="ChEBI" id="CHEBI:18248"/>
    </ligandPart>
</feature>
<reference key="1">
    <citation type="journal article" date="1996" name="Infect. Immun.">
        <title>Cloning and characterization of the catalase gene of Neisseria gonorrhoeae: use of the gonococcus as a host organism for recombinant DNA.</title>
        <authorList>
            <person name="Johnson S.R."/>
            <person name="Steiner B.M."/>
            <person name="Perkins G.H."/>
        </authorList>
    </citation>
    <scope>NUCLEOTIDE SEQUENCE [GENOMIC DNA]</scope>
</reference>
<accession>Q59602</accession>
<gene>
    <name type="primary">katA</name>
</gene>
<proteinExistence type="inferred from homology"/>
<keyword id="KW-0349">Heme</keyword>
<keyword id="KW-0376">Hydrogen peroxide</keyword>
<keyword id="KW-0408">Iron</keyword>
<keyword id="KW-0479">Metal-binding</keyword>
<keyword id="KW-0560">Oxidoreductase</keyword>
<keyword id="KW-0575">Peroxidase</keyword>
<comment type="function">
    <text>Decomposes hydrogen peroxide into water and oxygen; serves to protect cells from the toxic effects of hydrogen peroxide.</text>
</comment>
<comment type="catalytic activity">
    <reaction evidence="2">
        <text>2 H2O2 = O2 + 2 H2O</text>
        <dbReference type="Rhea" id="RHEA:20309"/>
        <dbReference type="ChEBI" id="CHEBI:15377"/>
        <dbReference type="ChEBI" id="CHEBI:15379"/>
        <dbReference type="ChEBI" id="CHEBI:16240"/>
        <dbReference type="EC" id="1.11.1.6"/>
    </reaction>
</comment>
<comment type="cofactor">
    <cofactor>
        <name>heme</name>
        <dbReference type="ChEBI" id="CHEBI:30413"/>
    </cofactor>
</comment>
<comment type="similarity">
    <text evidence="3">Belongs to the catalase family.</text>
</comment>